<protein>
    <recommendedName>
        <fullName evidence="1">Phosphoglycolate phosphatase</fullName>
        <shortName evidence="1">PGP</shortName>
        <shortName evidence="1">PGPase</shortName>
        <ecNumber evidence="1">3.1.3.18</ecNumber>
    </recommendedName>
</protein>
<feature type="chain" id="PRO_1000184850" description="Phosphoglycolate phosphatase">
    <location>
        <begin position="1"/>
        <end position="227"/>
    </location>
</feature>
<feature type="active site" description="Nucleophile" evidence="1">
    <location>
        <position position="8"/>
    </location>
</feature>
<feature type="binding site" evidence="1">
    <location>
        <position position="8"/>
    </location>
    <ligand>
        <name>Mg(2+)</name>
        <dbReference type="ChEBI" id="CHEBI:18420"/>
    </ligand>
</feature>
<feature type="binding site" evidence="1">
    <location>
        <position position="10"/>
    </location>
    <ligand>
        <name>Mg(2+)</name>
        <dbReference type="ChEBI" id="CHEBI:18420"/>
    </ligand>
</feature>
<feature type="binding site" evidence="1">
    <location>
        <position position="152"/>
    </location>
    <ligand>
        <name>substrate</name>
    </ligand>
</feature>
<feature type="binding site" evidence="1">
    <location>
        <position position="175"/>
    </location>
    <ligand>
        <name>Mg(2+)</name>
        <dbReference type="ChEBI" id="CHEBI:18420"/>
    </ligand>
</feature>
<feature type="binding site" evidence="1">
    <location>
        <position position="179"/>
    </location>
    <ligand>
        <name>Mg(2+)</name>
        <dbReference type="ChEBI" id="CHEBI:18420"/>
    </ligand>
</feature>
<dbReference type="EC" id="3.1.3.18" evidence="1"/>
<dbReference type="EMBL" id="CP001365">
    <property type="protein sequence ID" value="ACM56713.1"/>
    <property type="molecule type" value="Genomic_DNA"/>
</dbReference>
<dbReference type="RefSeq" id="WP_015909860.1">
    <property type="nucleotide sequence ID" value="NC_012029.1"/>
</dbReference>
<dbReference type="SMR" id="B9LMX5"/>
<dbReference type="GeneID" id="7400928"/>
<dbReference type="KEGG" id="hla:Hlac_1119"/>
<dbReference type="eggNOG" id="arCOG01213">
    <property type="taxonomic scope" value="Archaea"/>
</dbReference>
<dbReference type="HOGENOM" id="CLU_044146_2_0_2"/>
<dbReference type="Proteomes" id="UP000000740">
    <property type="component" value="Chromosome 1"/>
</dbReference>
<dbReference type="GO" id="GO:0005829">
    <property type="term" value="C:cytosol"/>
    <property type="evidence" value="ECO:0007669"/>
    <property type="project" value="TreeGrafter"/>
</dbReference>
<dbReference type="GO" id="GO:0000287">
    <property type="term" value="F:magnesium ion binding"/>
    <property type="evidence" value="ECO:0007669"/>
    <property type="project" value="InterPro"/>
</dbReference>
<dbReference type="GO" id="GO:0008967">
    <property type="term" value="F:phosphoglycolate phosphatase activity"/>
    <property type="evidence" value="ECO:0007669"/>
    <property type="project" value="UniProtKB-UniRule"/>
</dbReference>
<dbReference type="CDD" id="cd01427">
    <property type="entry name" value="HAD_like"/>
    <property type="match status" value="1"/>
</dbReference>
<dbReference type="CDD" id="cd07514">
    <property type="entry name" value="HAD_Pase"/>
    <property type="match status" value="1"/>
</dbReference>
<dbReference type="Gene3D" id="3.90.1070.10">
    <property type="match status" value="1"/>
</dbReference>
<dbReference type="Gene3D" id="3.40.50.1000">
    <property type="entry name" value="HAD superfamily/HAD-like"/>
    <property type="match status" value="1"/>
</dbReference>
<dbReference type="HAMAP" id="MF_01419">
    <property type="entry name" value="GPH_hydrolase_arch"/>
    <property type="match status" value="1"/>
</dbReference>
<dbReference type="InterPro" id="IPR036412">
    <property type="entry name" value="HAD-like_sf"/>
</dbReference>
<dbReference type="InterPro" id="IPR006379">
    <property type="entry name" value="HAD-SF_hydro_IIB"/>
</dbReference>
<dbReference type="InterPro" id="IPR023214">
    <property type="entry name" value="HAD_sf"/>
</dbReference>
<dbReference type="InterPro" id="IPR006382">
    <property type="entry name" value="PGPase"/>
</dbReference>
<dbReference type="NCBIfam" id="TIGR01484">
    <property type="entry name" value="HAD-SF-IIB"/>
    <property type="match status" value="1"/>
</dbReference>
<dbReference type="NCBIfam" id="TIGR01487">
    <property type="entry name" value="Pglycolate_arch"/>
    <property type="match status" value="1"/>
</dbReference>
<dbReference type="PANTHER" id="PTHR10000:SF8">
    <property type="entry name" value="HAD SUPERFAMILY HYDROLASE-LIKE, TYPE 3"/>
    <property type="match status" value="1"/>
</dbReference>
<dbReference type="PANTHER" id="PTHR10000">
    <property type="entry name" value="PHOSPHOSERINE PHOSPHATASE"/>
    <property type="match status" value="1"/>
</dbReference>
<dbReference type="Pfam" id="PF08282">
    <property type="entry name" value="Hydrolase_3"/>
    <property type="match status" value="2"/>
</dbReference>
<dbReference type="SUPFAM" id="SSF56784">
    <property type="entry name" value="HAD-like"/>
    <property type="match status" value="1"/>
</dbReference>
<evidence type="ECO:0000255" key="1">
    <source>
        <dbReference type="HAMAP-Rule" id="MF_01419"/>
    </source>
</evidence>
<accession>B9LMX5</accession>
<reference key="1">
    <citation type="journal article" date="2016" name="Stand. Genomic Sci.">
        <title>Complete genome sequence of the Antarctic Halorubrum lacusprofundi type strain ACAM 34.</title>
        <authorList>
            <person name="Anderson I.J."/>
            <person name="DasSarma P."/>
            <person name="Lucas S."/>
            <person name="Copeland A."/>
            <person name="Lapidus A."/>
            <person name="Del Rio T.G."/>
            <person name="Tice H."/>
            <person name="Dalin E."/>
            <person name="Bruce D.C."/>
            <person name="Goodwin L."/>
            <person name="Pitluck S."/>
            <person name="Sims D."/>
            <person name="Brettin T.S."/>
            <person name="Detter J.C."/>
            <person name="Han C.S."/>
            <person name="Larimer F."/>
            <person name="Hauser L."/>
            <person name="Land M."/>
            <person name="Ivanova N."/>
            <person name="Richardson P."/>
            <person name="Cavicchioli R."/>
            <person name="DasSarma S."/>
            <person name="Woese C.R."/>
            <person name="Kyrpides N.C."/>
        </authorList>
    </citation>
    <scope>NUCLEOTIDE SEQUENCE [LARGE SCALE GENOMIC DNA]</scope>
    <source>
        <strain>ATCC 49239 / DSM 5036 / JCM 8891 / ACAM 34</strain>
    </source>
</reference>
<organism>
    <name type="scientific">Halorubrum lacusprofundi (strain ATCC 49239 / DSM 5036 / JCM 8891 / ACAM 34)</name>
    <dbReference type="NCBI Taxonomy" id="416348"/>
    <lineage>
        <taxon>Archaea</taxon>
        <taxon>Methanobacteriati</taxon>
        <taxon>Methanobacteriota</taxon>
        <taxon>Stenosarchaea group</taxon>
        <taxon>Halobacteria</taxon>
        <taxon>Halobacteriales</taxon>
        <taxon>Haloferacaceae</taxon>
        <taxon>Halorubrum</taxon>
    </lineage>
</organism>
<name>PGP_HALLT</name>
<gene>
    <name type="ordered locus">Hlac_1119</name>
</gene>
<proteinExistence type="inferred from homology"/>
<sequence>MVPPLALDIDGTLTTASGRLDARVFELLPDWDAPVVLATGKAFPYPVALAHFLGRAETVIAENGGVVHVDGETAILGDAEAPRAVVEAFRERGGDPGWGARDTVNRWRETEVALSLDADEALLREVAAAAGGDVEVVDTGYAYHVKSTGVSKGRGLERVGDALGIGPDEFVAIGDSENDVSTFAVAGESYAVANADGAAREAADIVVADSYMDGTAGVLADLRTRTE</sequence>
<keyword id="KW-0119">Carbohydrate metabolism</keyword>
<keyword id="KW-0378">Hydrolase</keyword>
<keyword id="KW-0460">Magnesium</keyword>
<keyword id="KW-0479">Metal-binding</keyword>
<keyword id="KW-1185">Reference proteome</keyword>
<comment type="function">
    <text evidence="1">Catalyzes the dephosphorylation of 2-phosphoglycolate.</text>
</comment>
<comment type="catalytic activity">
    <reaction evidence="1">
        <text>2-phosphoglycolate + H2O = glycolate + phosphate</text>
        <dbReference type="Rhea" id="RHEA:14369"/>
        <dbReference type="ChEBI" id="CHEBI:15377"/>
        <dbReference type="ChEBI" id="CHEBI:29805"/>
        <dbReference type="ChEBI" id="CHEBI:43474"/>
        <dbReference type="ChEBI" id="CHEBI:58033"/>
        <dbReference type="EC" id="3.1.3.18"/>
    </reaction>
</comment>
<comment type="cofactor">
    <cofactor evidence="1">
        <name>Mg(2+)</name>
        <dbReference type="ChEBI" id="CHEBI:18420"/>
    </cofactor>
</comment>
<comment type="similarity">
    <text evidence="1">Belongs to the archaeal SPP-like hydrolase family.</text>
</comment>